<organism>
    <name type="scientific">Bos taurus</name>
    <name type="common">Bovine</name>
    <dbReference type="NCBI Taxonomy" id="9913"/>
    <lineage>
        <taxon>Eukaryota</taxon>
        <taxon>Metazoa</taxon>
        <taxon>Chordata</taxon>
        <taxon>Craniata</taxon>
        <taxon>Vertebrata</taxon>
        <taxon>Euteleostomi</taxon>
        <taxon>Mammalia</taxon>
        <taxon>Eutheria</taxon>
        <taxon>Laurasiatheria</taxon>
        <taxon>Artiodactyla</taxon>
        <taxon>Ruminantia</taxon>
        <taxon>Pecora</taxon>
        <taxon>Bovidae</taxon>
        <taxon>Bovinae</taxon>
        <taxon>Bos</taxon>
    </lineage>
</organism>
<accession>Q2Q0J1</accession>
<accession>Q2Q0J0</accession>
<reference key="1">
    <citation type="journal article" date="2006" name="Gene">
        <title>Identification and characterization of a novel bovine oocyte-specific secreted protein gene.</title>
        <authorList>
            <person name="Tremblay K."/>
            <person name="Vigneault C."/>
            <person name="McGraw S."/>
            <person name="Morin G."/>
            <person name="Sirard M.-A."/>
        </authorList>
    </citation>
    <scope>NUCLEOTIDE SEQUENCE [MRNA] (ISOFORMS 1 AND 2)</scope>
    <scope>TISSUE SPECIFICITY</scope>
    <source>
        <tissue>Oocyte</tissue>
    </source>
</reference>
<comment type="function">
    <text evidence="1">May be involved in cell differentiation.</text>
</comment>
<comment type="subcellular location">
    <subcellularLocation>
        <location evidence="5">Secreted</location>
    </subcellularLocation>
</comment>
<comment type="alternative products">
    <event type="alternative splicing"/>
    <isoform>
        <id>Q2Q0J1-1</id>
        <name>1</name>
        <name>OOSP1_v1</name>
        <sequence type="displayed"/>
    </isoform>
    <isoform>
        <id>Q2Q0J1-2</id>
        <name>2</name>
        <name>OOSP1_v2</name>
        <sequence type="described" ref="VSP_034662 VSP_034663"/>
    </isoform>
</comment>
<comment type="tissue specificity">
    <text evidence="3">Oocyte-specific.</text>
</comment>
<comment type="similarity">
    <text evidence="5">Belongs to the PLAC1 family.</text>
</comment>
<sequence>MKPSSGLRGLLVLFSLTWTCAGDWSAVKVRCSYFWFYAKIKPTLFHNLYMNPDEAFLGNDCPVTYVSPDAHYEFFYYSNKCGIITKTFQETLLLQTKIKYMSSNSGDTAEMPVSCVVTQQACMYHLSNETESGDDETSSEDMEVSYIMQSQNDLNTTFSLCAK</sequence>
<proteinExistence type="evidence at transcript level"/>
<name>OOSP1_BOVIN</name>
<feature type="signal peptide" evidence="2">
    <location>
        <begin position="1"/>
        <end position="21"/>
    </location>
</feature>
<feature type="chain" id="PRO_0000343687" description="Oocyte-secreted protein 1">
    <location>
        <begin position="22"/>
        <end position="163"/>
    </location>
</feature>
<feature type="splice variant" id="VSP_034662" description="In isoform 2." evidence="4">
    <original>AVKVRCSYFW</original>
    <variation>DFPGDSSASD</variation>
    <location>
        <begin position="26"/>
        <end position="35"/>
    </location>
</feature>
<feature type="splice variant" id="VSP_034663" description="In isoform 2." evidence="4">
    <location>
        <begin position="36"/>
        <end position="163"/>
    </location>
</feature>
<protein>
    <recommendedName>
        <fullName>Oocyte-secreted protein 1</fullName>
    </recommendedName>
</protein>
<gene>
    <name type="primary">OOSP1</name>
</gene>
<dbReference type="EMBL" id="DQ256127">
    <property type="protein sequence ID" value="ABB77201.1"/>
    <property type="molecule type" value="mRNA"/>
</dbReference>
<dbReference type="EMBL" id="DQ256128">
    <property type="protein sequence ID" value="ABB77202.1"/>
    <property type="molecule type" value="mRNA"/>
</dbReference>
<dbReference type="RefSeq" id="NP_001033776.1">
    <molecule id="Q2Q0J1-1"/>
    <property type="nucleotide sequence ID" value="NM_001038687.1"/>
</dbReference>
<dbReference type="SMR" id="Q2Q0J1"/>
<dbReference type="STRING" id="9913.ENSBTAP00000039023"/>
<dbReference type="PaxDb" id="9913-ENSBTAP00000039023"/>
<dbReference type="Ensembl" id="ENSBTAT00000039223.3">
    <molecule id="Q2Q0J1-1"/>
    <property type="protein sequence ID" value="ENSBTAP00000039023.2"/>
    <property type="gene ID" value="ENSBTAG00000027348.4"/>
</dbReference>
<dbReference type="Ensembl" id="ENSBTAT00000055939.2">
    <molecule id="Q2Q0J1-2"/>
    <property type="protein sequence ID" value="ENSBTAP00000051497.1"/>
    <property type="gene ID" value="ENSBTAG00000027348.4"/>
</dbReference>
<dbReference type="GeneID" id="616216"/>
<dbReference type="KEGG" id="bta:616216"/>
<dbReference type="CTD" id="219990"/>
<dbReference type="VEuPathDB" id="HostDB:ENSBTAG00000027348"/>
<dbReference type="eggNOG" id="ENOG502T3UK">
    <property type="taxonomic scope" value="Eukaryota"/>
</dbReference>
<dbReference type="GeneTree" id="ENSGT00530000064049"/>
<dbReference type="HOGENOM" id="CLU_117245_0_0_1"/>
<dbReference type="InParanoid" id="Q2Q0J1"/>
<dbReference type="OMA" id="IWTCAED"/>
<dbReference type="OrthoDB" id="9715999at2759"/>
<dbReference type="TreeFam" id="TF338479"/>
<dbReference type="Proteomes" id="UP000009136">
    <property type="component" value="Chromosome 15"/>
</dbReference>
<dbReference type="Bgee" id="ENSBTAG00000027348">
    <property type="expression patterns" value="Expressed in oocyte and 53 other cell types or tissues"/>
</dbReference>
<dbReference type="GO" id="GO:0005576">
    <property type="term" value="C:extracellular region"/>
    <property type="evidence" value="ECO:0007669"/>
    <property type="project" value="UniProtKB-SubCell"/>
</dbReference>
<dbReference type="Gene3D" id="2.60.40.3210">
    <property type="entry name" value="Zona pellucida, ZP-N domain"/>
    <property type="match status" value="1"/>
</dbReference>
<dbReference type="InterPro" id="IPR033222">
    <property type="entry name" value="PLAC1_fam"/>
</dbReference>
<dbReference type="PANTHER" id="PTHR14380:SF3">
    <property type="entry name" value="OOCYTE-SECRETED PROTEIN 1"/>
    <property type="match status" value="1"/>
</dbReference>
<dbReference type="PANTHER" id="PTHR14380">
    <property type="entry name" value="PLACENTA-SPECIFIC PROTEIN 1"/>
    <property type="match status" value="1"/>
</dbReference>
<evidence type="ECO:0000250" key="1"/>
<evidence type="ECO:0000255" key="2"/>
<evidence type="ECO:0000269" key="3">
    <source>
    </source>
</evidence>
<evidence type="ECO:0000303" key="4">
    <source>
    </source>
</evidence>
<evidence type="ECO:0000305" key="5"/>
<keyword id="KW-0025">Alternative splicing</keyword>
<keyword id="KW-1185">Reference proteome</keyword>
<keyword id="KW-0964">Secreted</keyword>
<keyword id="KW-0732">Signal</keyword>